<dbReference type="EMBL" id="AY634287">
    <property type="protein sequence ID" value="AAW02893.1"/>
    <property type="molecule type" value="Genomic_DNA"/>
</dbReference>
<dbReference type="EMBL" id="HE601533">
    <property type="protein sequence ID" value="CAP39847.3"/>
    <property type="molecule type" value="Genomic_DNA"/>
</dbReference>
<dbReference type="SMR" id="Q60MJ0"/>
<dbReference type="FunCoup" id="Q60MJ0">
    <property type="interactions" value="68"/>
</dbReference>
<dbReference type="STRING" id="6238.Q60MJ0"/>
<dbReference type="EnsemblMetazoa" id="CBG23127.1">
    <property type="protein sequence ID" value="CBG23127.1"/>
    <property type="gene ID" value="WBGene00041540"/>
</dbReference>
<dbReference type="KEGG" id="cbr:CBG_23127"/>
<dbReference type="CTD" id="8578457"/>
<dbReference type="WormBase" id="CBG23127">
    <property type="protein sequence ID" value="CBP20652"/>
    <property type="gene ID" value="WBGene00041540"/>
    <property type="gene designation" value="Cbr-gpa-1"/>
</dbReference>
<dbReference type="eggNOG" id="KOG0082">
    <property type="taxonomic scope" value="Eukaryota"/>
</dbReference>
<dbReference type="HOGENOM" id="CLU_014184_6_0_1"/>
<dbReference type="InParanoid" id="Q60MJ0"/>
<dbReference type="OMA" id="HDSAKYF"/>
<dbReference type="OrthoDB" id="5817230at2759"/>
<dbReference type="Proteomes" id="UP000008549">
    <property type="component" value="Unassembled WGS sequence"/>
</dbReference>
<dbReference type="GO" id="GO:0005737">
    <property type="term" value="C:cytoplasm"/>
    <property type="evidence" value="ECO:0000318"/>
    <property type="project" value="GO_Central"/>
</dbReference>
<dbReference type="GO" id="GO:0005834">
    <property type="term" value="C:heterotrimeric G-protein complex"/>
    <property type="evidence" value="ECO:0000318"/>
    <property type="project" value="GO_Central"/>
</dbReference>
<dbReference type="GO" id="GO:0001664">
    <property type="term" value="F:G protein-coupled receptor binding"/>
    <property type="evidence" value="ECO:0000318"/>
    <property type="project" value="GO_Central"/>
</dbReference>
<dbReference type="GO" id="GO:0031683">
    <property type="term" value="F:G-protein beta/gamma-subunit complex binding"/>
    <property type="evidence" value="ECO:0000318"/>
    <property type="project" value="GO_Central"/>
</dbReference>
<dbReference type="GO" id="GO:0005525">
    <property type="term" value="F:GTP binding"/>
    <property type="evidence" value="ECO:0007669"/>
    <property type="project" value="UniProtKB-KW"/>
</dbReference>
<dbReference type="GO" id="GO:0003924">
    <property type="term" value="F:GTPase activity"/>
    <property type="evidence" value="ECO:0000318"/>
    <property type="project" value="GO_Central"/>
</dbReference>
<dbReference type="GO" id="GO:0046872">
    <property type="term" value="F:metal ion binding"/>
    <property type="evidence" value="ECO:0007669"/>
    <property type="project" value="UniProtKB-KW"/>
</dbReference>
<dbReference type="GO" id="GO:0007188">
    <property type="term" value="P:adenylate cyclase-modulating G protein-coupled receptor signaling pathway"/>
    <property type="evidence" value="ECO:0000318"/>
    <property type="project" value="GO_Central"/>
</dbReference>
<dbReference type="CDD" id="cd00066">
    <property type="entry name" value="G-alpha"/>
    <property type="match status" value="1"/>
</dbReference>
<dbReference type="FunFam" id="1.10.400.10:FF:000011">
    <property type="entry name" value="Guanine nucleotide-binding protein alpha-1 subunit"/>
    <property type="match status" value="1"/>
</dbReference>
<dbReference type="FunFam" id="3.40.50.300:FF:002307">
    <property type="entry name" value="Guanine nucleotide-binding protein G(k) subunit alpha"/>
    <property type="match status" value="1"/>
</dbReference>
<dbReference type="FunFam" id="3.40.50.300:FF:000692">
    <property type="entry name" value="Guanine nucleotide-binding protein subunit alpha"/>
    <property type="match status" value="1"/>
</dbReference>
<dbReference type="Gene3D" id="1.10.400.10">
    <property type="entry name" value="GI Alpha 1, domain 2-like"/>
    <property type="match status" value="1"/>
</dbReference>
<dbReference type="Gene3D" id="3.40.50.300">
    <property type="entry name" value="P-loop containing nucleotide triphosphate hydrolases"/>
    <property type="match status" value="1"/>
</dbReference>
<dbReference type="InterPro" id="IPR001019">
    <property type="entry name" value="Gprotein_alpha_su"/>
</dbReference>
<dbReference type="InterPro" id="IPR011025">
    <property type="entry name" value="GproteinA_insert"/>
</dbReference>
<dbReference type="InterPro" id="IPR027417">
    <property type="entry name" value="P-loop_NTPase"/>
</dbReference>
<dbReference type="PANTHER" id="PTHR10218">
    <property type="entry name" value="GTP-BINDING PROTEIN ALPHA SUBUNIT"/>
    <property type="match status" value="1"/>
</dbReference>
<dbReference type="PANTHER" id="PTHR10218:SF232">
    <property type="entry name" value="GUANINE NUCLEOTIDE-BINDING PROTEIN ALPHA-1 SUBUNIT"/>
    <property type="match status" value="1"/>
</dbReference>
<dbReference type="Pfam" id="PF00503">
    <property type="entry name" value="G-alpha"/>
    <property type="match status" value="1"/>
</dbReference>
<dbReference type="PRINTS" id="PR00318">
    <property type="entry name" value="GPROTEINA"/>
</dbReference>
<dbReference type="SMART" id="SM00275">
    <property type="entry name" value="G_alpha"/>
    <property type="match status" value="1"/>
</dbReference>
<dbReference type="SUPFAM" id="SSF52540">
    <property type="entry name" value="P-loop containing nucleoside triphosphate hydrolases"/>
    <property type="match status" value="1"/>
</dbReference>
<dbReference type="SUPFAM" id="SSF47895">
    <property type="entry name" value="Transducin (alpha subunit), insertion domain"/>
    <property type="match status" value="1"/>
</dbReference>
<dbReference type="PROSITE" id="PS51882">
    <property type="entry name" value="G_ALPHA"/>
    <property type="match status" value="1"/>
</dbReference>
<name>GPA1_CAEBR</name>
<evidence type="ECO:0000250" key="1">
    <source>
        <dbReference type="UniProtKB" id="P18064"/>
    </source>
</evidence>
<evidence type="ECO:0000255" key="2"/>
<evidence type="ECO:0000255" key="3">
    <source>
        <dbReference type="PROSITE-ProRule" id="PRU01230"/>
    </source>
</evidence>
<evidence type="ECO:0000305" key="4"/>
<sequence>MGNCDSRELAEQTKQSKKINTELAIAKKDDENVIKLLLLGAGESGKSTVLKQMRIIHNSGFSQEESMTKRNVVCANTIQAMGALIEGMRQLRIDFVNRICNAHEKLIRETLSENTEYNPFNDAMYTALSDLWADKGIQSAYGKRELFYLADSAKYFFDSLARINEPNYIPTENDILHTRVPTMGVIEVKFQMKGKVFRVFDVGGQRSQRKKWIHCFDDAKALIYVASLSEYDQVLLEDNTTNRMQESLQLFKQVVNNKYFVNTSVILFLNKVDLFEEKIIIKKRSLTIAFDAYTGPQEDVEAAITFIDSKYRAMADNKDKNIYVHKTCATDTHQVQYVLDAVLDTILSSKLKGCGLF</sequence>
<feature type="initiator methionine" description="Removed" evidence="2">
    <location>
        <position position="1"/>
    </location>
</feature>
<feature type="chain" id="PRO_0000203628" description="Guanine nucleotide-binding protein alpha-1 subunit">
    <location>
        <begin position="2"/>
        <end position="357"/>
    </location>
</feature>
<feature type="domain" description="G-alpha" evidence="3">
    <location>
        <begin position="32"/>
        <end position="357"/>
    </location>
</feature>
<feature type="region of interest" description="G1 motif" evidence="3">
    <location>
        <begin position="35"/>
        <end position="48"/>
    </location>
</feature>
<feature type="region of interest" description="G2 motif" evidence="3">
    <location>
        <begin position="174"/>
        <end position="182"/>
    </location>
</feature>
<feature type="region of interest" description="G3 motif" evidence="3">
    <location>
        <begin position="197"/>
        <end position="206"/>
    </location>
</feature>
<feature type="region of interest" description="G4 motif" evidence="3">
    <location>
        <begin position="266"/>
        <end position="273"/>
    </location>
</feature>
<feature type="region of interest" description="G5 motif" evidence="3">
    <location>
        <begin position="327"/>
        <end position="332"/>
    </location>
</feature>
<feature type="binding site" evidence="1">
    <location>
        <position position="43"/>
    </location>
    <ligand>
        <name>GTP</name>
        <dbReference type="ChEBI" id="CHEBI:37565"/>
    </ligand>
</feature>
<feature type="binding site" evidence="1">
    <location>
        <position position="44"/>
    </location>
    <ligand>
        <name>GTP</name>
        <dbReference type="ChEBI" id="CHEBI:37565"/>
    </ligand>
</feature>
<feature type="binding site" evidence="1">
    <location>
        <position position="45"/>
    </location>
    <ligand>
        <name>GTP</name>
        <dbReference type="ChEBI" id="CHEBI:37565"/>
    </ligand>
</feature>
<feature type="binding site" evidence="1">
    <location>
        <position position="46"/>
    </location>
    <ligand>
        <name>GTP</name>
        <dbReference type="ChEBI" id="CHEBI:37565"/>
    </ligand>
</feature>
<feature type="binding site" evidence="1">
    <location>
        <position position="47"/>
    </location>
    <ligand>
        <name>GTP</name>
        <dbReference type="ChEBI" id="CHEBI:37565"/>
    </ligand>
</feature>
<feature type="binding site" evidence="1">
    <location>
        <position position="47"/>
    </location>
    <ligand>
        <name>Mg(2+)</name>
        <dbReference type="ChEBI" id="CHEBI:18420"/>
    </ligand>
</feature>
<feature type="binding site" evidence="1">
    <location>
        <position position="48"/>
    </location>
    <ligand>
        <name>GTP</name>
        <dbReference type="ChEBI" id="CHEBI:37565"/>
    </ligand>
</feature>
<feature type="binding site" evidence="1">
    <location>
        <position position="151"/>
    </location>
    <ligand>
        <name>GTP</name>
        <dbReference type="ChEBI" id="CHEBI:37565"/>
    </ligand>
</feature>
<feature type="binding site" evidence="1">
    <location>
        <position position="176"/>
    </location>
    <ligand>
        <name>GTP</name>
        <dbReference type="ChEBI" id="CHEBI:37565"/>
    </ligand>
</feature>
<feature type="binding site" evidence="1">
    <location>
        <position position="182"/>
    </location>
    <ligand>
        <name>GTP</name>
        <dbReference type="ChEBI" id="CHEBI:37565"/>
    </ligand>
</feature>
<feature type="binding site" evidence="1">
    <location>
        <position position="182"/>
    </location>
    <ligand>
        <name>Mg(2+)</name>
        <dbReference type="ChEBI" id="CHEBI:18420"/>
    </ligand>
</feature>
<feature type="binding site" evidence="1">
    <location>
        <position position="204"/>
    </location>
    <ligand>
        <name>GTP</name>
        <dbReference type="ChEBI" id="CHEBI:37565"/>
    </ligand>
</feature>
<feature type="binding site" evidence="1">
    <location>
        <position position="270"/>
    </location>
    <ligand>
        <name>GTP</name>
        <dbReference type="ChEBI" id="CHEBI:37565"/>
    </ligand>
</feature>
<feature type="binding site" evidence="1">
    <location>
        <position position="271"/>
    </location>
    <ligand>
        <name>GTP</name>
        <dbReference type="ChEBI" id="CHEBI:37565"/>
    </ligand>
</feature>
<feature type="binding site" evidence="1">
    <location>
        <position position="273"/>
    </location>
    <ligand>
        <name>GTP</name>
        <dbReference type="ChEBI" id="CHEBI:37565"/>
    </ligand>
</feature>
<feature type="binding site" evidence="1">
    <location>
        <position position="329"/>
    </location>
    <ligand>
        <name>GTP</name>
        <dbReference type="ChEBI" id="CHEBI:37565"/>
    </ligand>
</feature>
<feature type="lipid moiety-binding region" description="N-myristoyl glycine" evidence="2">
    <location>
        <position position="2"/>
    </location>
</feature>
<feature type="lipid moiety-binding region" description="S-palmitoyl cysteine" evidence="2">
    <location>
        <position position="4"/>
    </location>
</feature>
<comment type="function">
    <text>Guanine nucleotide-binding proteins (G proteins) are involved as modulators or transducers in various transmembrane signaling systems.</text>
</comment>
<comment type="cofactor">
    <cofactor evidence="1">
        <name>Mg(2+)</name>
        <dbReference type="ChEBI" id="CHEBI:18420"/>
    </cofactor>
</comment>
<comment type="subunit">
    <text>G proteins are composed of 3 units; alpha, beta and gamma. The alpha chain contains the guanine nucleotide binding site.</text>
</comment>
<comment type="similarity">
    <text evidence="4">Belongs to the G-alpha family. G(q) subfamily.</text>
</comment>
<organism>
    <name type="scientific">Caenorhabditis briggsae</name>
    <dbReference type="NCBI Taxonomy" id="6238"/>
    <lineage>
        <taxon>Eukaryota</taxon>
        <taxon>Metazoa</taxon>
        <taxon>Ecdysozoa</taxon>
        <taxon>Nematoda</taxon>
        <taxon>Chromadorea</taxon>
        <taxon>Rhabditida</taxon>
        <taxon>Rhabditina</taxon>
        <taxon>Rhabditomorpha</taxon>
        <taxon>Rhabditoidea</taxon>
        <taxon>Rhabditidae</taxon>
        <taxon>Peloderinae</taxon>
        <taxon>Caenorhabditis</taxon>
    </lineage>
</organism>
<gene>
    <name type="primary">gpa-1</name>
    <name type="ORF">CBG23127</name>
</gene>
<protein>
    <recommendedName>
        <fullName>Guanine nucleotide-binding protein alpha-1 subunit</fullName>
    </recommendedName>
</protein>
<reference key="1">
    <citation type="journal article" date="2005" name="Mol. Genet. Genomics">
        <title>Functional constraint and divergence in the G protein family in Caenorhabditis elegans and Caenorhabditis briggsae.</title>
        <authorList>
            <person name="Jovelin R."/>
            <person name="Phillips P.C."/>
        </authorList>
    </citation>
    <scope>NUCLEOTIDE SEQUENCE [GENOMIC DNA]</scope>
    <source>
        <strain>AF16</strain>
    </source>
</reference>
<reference key="2">
    <citation type="journal article" date="2003" name="PLoS Biol.">
        <title>The genome sequence of Caenorhabditis briggsae: a platform for comparative genomics.</title>
        <authorList>
            <person name="Stein L.D."/>
            <person name="Bao Z."/>
            <person name="Blasiar D."/>
            <person name="Blumenthal T."/>
            <person name="Brent M.R."/>
            <person name="Chen N."/>
            <person name="Chinwalla A."/>
            <person name="Clarke L."/>
            <person name="Clee C."/>
            <person name="Coghlan A."/>
            <person name="Coulson A."/>
            <person name="D'Eustachio P."/>
            <person name="Fitch D.H.A."/>
            <person name="Fulton L.A."/>
            <person name="Fulton R.E."/>
            <person name="Griffiths-Jones S."/>
            <person name="Harris T.W."/>
            <person name="Hillier L.W."/>
            <person name="Kamath R."/>
            <person name="Kuwabara P.E."/>
            <person name="Mardis E.R."/>
            <person name="Marra M.A."/>
            <person name="Miner T.L."/>
            <person name="Minx P."/>
            <person name="Mullikin J.C."/>
            <person name="Plumb R.W."/>
            <person name="Rogers J."/>
            <person name="Schein J.E."/>
            <person name="Sohrmann M."/>
            <person name="Spieth J."/>
            <person name="Stajich J.E."/>
            <person name="Wei C."/>
            <person name="Willey D."/>
            <person name="Wilson R.K."/>
            <person name="Durbin R.M."/>
            <person name="Waterston R.H."/>
        </authorList>
    </citation>
    <scope>NUCLEOTIDE SEQUENCE [LARGE SCALE GENOMIC DNA]</scope>
    <source>
        <strain>AF16</strain>
    </source>
</reference>
<proteinExistence type="inferred from homology"/>
<keyword id="KW-0342">GTP-binding</keyword>
<keyword id="KW-0378">Hydrolase</keyword>
<keyword id="KW-0449">Lipoprotein</keyword>
<keyword id="KW-0460">Magnesium</keyword>
<keyword id="KW-0479">Metal-binding</keyword>
<keyword id="KW-0519">Myristate</keyword>
<keyword id="KW-0547">Nucleotide-binding</keyword>
<keyword id="KW-0564">Palmitate</keyword>
<keyword id="KW-1185">Reference proteome</keyword>
<keyword id="KW-0807">Transducer</keyword>
<accession>Q60MJ0</accession>
<accession>A8Y4M7</accession>